<comment type="function">
    <text evidence="1">Involved in targeting and insertion of nascent membrane proteins into the cytoplasmic membrane. Acts as a receptor for the complex formed by the signal recognition particle (SRP) and the ribosome-nascent chain (RNC). Interaction with SRP-RNC leads to the transfer of the RNC complex to the Sec translocase for insertion into the membrane, the hydrolysis of GTP by both Ffh and FtsY, and the dissociation of the SRP-FtsY complex into the individual components.</text>
</comment>
<comment type="catalytic activity">
    <reaction evidence="1">
        <text>GTP + H2O = GDP + phosphate + H(+)</text>
        <dbReference type="Rhea" id="RHEA:19669"/>
        <dbReference type="ChEBI" id="CHEBI:15377"/>
        <dbReference type="ChEBI" id="CHEBI:15378"/>
        <dbReference type="ChEBI" id="CHEBI:37565"/>
        <dbReference type="ChEBI" id="CHEBI:43474"/>
        <dbReference type="ChEBI" id="CHEBI:58189"/>
        <dbReference type="EC" id="3.6.5.4"/>
    </reaction>
</comment>
<comment type="subunit">
    <text evidence="1">Part of the signal recognition particle protein translocation system, which is composed of SRP and FtsY. SRP is a ribonucleoprotein composed of Ffh and a 4.5S RNA molecule.</text>
</comment>
<comment type="subcellular location">
    <subcellularLocation>
        <location>Cell inner membrane</location>
        <topology>Peripheral membrane protein</topology>
        <orientation>Cytoplasmic side</orientation>
    </subcellularLocation>
    <subcellularLocation>
        <location evidence="1">Cytoplasm</location>
    </subcellularLocation>
</comment>
<comment type="similarity">
    <text evidence="1">Belongs to the GTP-binding SRP family. FtsY subfamily.</text>
</comment>
<keyword id="KW-0997">Cell inner membrane</keyword>
<keyword id="KW-1003">Cell membrane</keyword>
<keyword id="KW-0963">Cytoplasm</keyword>
<keyword id="KW-0342">GTP-binding</keyword>
<keyword id="KW-0378">Hydrolase</keyword>
<keyword id="KW-0472">Membrane</keyword>
<keyword id="KW-0547">Nucleotide-binding</keyword>
<keyword id="KW-0675">Receptor</keyword>
<keyword id="KW-1185">Reference proteome</keyword>
<organism>
    <name type="scientific">Rickettsia prowazekii (strain Madrid E)</name>
    <dbReference type="NCBI Taxonomy" id="272947"/>
    <lineage>
        <taxon>Bacteria</taxon>
        <taxon>Pseudomonadati</taxon>
        <taxon>Pseudomonadota</taxon>
        <taxon>Alphaproteobacteria</taxon>
        <taxon>Rickettsiales</taxon>
        <taxon>Rickettsiaceae</taxon>
        <taxon>Rickettsieae</taxon>
        <taxon>Rickettsia</taxon>
        <taxon>typhus group</taxon>
    </lineage>
</organism>
<feature type="chain" id="PRO_0000101145" description="Signal recognition particle receptor FtsY">
    <location>
        <begin position="1"/>
        <end position="303"/>
    </location>
</feature>
<feature type="binding site" evidence="1">
    <location>
        <begin position="108"/>
        <end position="115"/>
    </location>
    <ligand>
        <name>GTP</name>
        <dbReference type="ChEBI" id="CHEBI:37565"/>
    </ligand>
</feature>
<feature type="binding site" evidence="1">
    <location>
        <begin position="190"/>
        <end position="194"/>
    </location>
    <ligand>
        <name>GTP</name>
        <dbReference type="ChEBI" id="CHEBI:37565"/>
    </ligand>
</feature>
<feature type="binding site" evidence="1">
    <location>
        <begin position="254"/>
        <end position="257"/>
    </location>
    <ligand>
        <name>GTP</name>
        <dbReference type="ChEBI" id="CHEBI:37565"/>
    </ligand>
</feature>
<accession>O05948</accession>
<sequence>MITIFNKLKQSLSKTSNTISAGIDKIFYKRKLDKETLNELEELLISSDISISVVTHIIEEFKNVKFDKTIDSDTVKEAIAKLIEQQLSKSEIPFTLSENKLNIILVCGVNGVGKTTTIGKLSALYSAEGKKVAVAACDTFRAAAINQLSSWVHRANALLITGKASADPASVAYRAIEESIKQNIDILFIDTAGRLHNNKNLMDELSKIVKVIKKLDENAPTHSILIIDAITGQNTYNQIEYFNDVTNLTGLIVTKLDGSAKAGVLVGAVQKFNLPVYFIGIGEKIEDLKIFNRHDFSRSLVGL</sequence>
<dbReference type="EC" id="3.6.5.4" evidence="1"/>
<dbReference type="EMBL" id="Y11784">
    <property type="protein sequence ID" value="CAA72477.1"/>
    <property type="molecule type" value="Genomic_DNA"/>
</dbReference>
<dbReference type="EMBL" id="AJ235273">
    <property type="protein sequence ID" value="CAA15202.1"/>
    <property type="molecule type" value="Genomic_DNA"/>
</dbReference>
<dbReference type="EMBL" id="AJ238755">
    <property type="protein sequence ID" value="CAB56084.1"/>
    <property type="molecule type" value="Genomic_DNA"/>
</dbReference>
<dbReference type="EMBL" id="AJ238756">
    <property type="protein sequence ID" value="CAB56088.1"/>
    <property type="molecule type" value="Genomic_DNA"/>
</dbReference>
<dbReference type="PIR" id="B71638">
    <property type="entry name" value="B71638"/>
</dbReference>
<dbReference type="RefSeq" id="NP_221126.1">
    <property type="nucleotide sequence ID" value="NC_000963.1"/>
</dbReference>
<dbReference type="RefSeq" id="WP_004596957.1">
    <property type="nucleotide sequence ID" value="NC_000963.1"/>
</dbReference>
<dbReference type="SMR" id="O05948"/>
<dbReference type="STRING" id="272947.gene:17555845"/>
<dbReference type="EnsemblBacteria" id="CAA15202">
    <property type="protein sequence ID" value="CAA15202"/>
    <property type="gene ID" value="CAA15202"/>
</dbReference>
<dbReference type="GeneID" id="57569898"/>
<dbReference type="KEGG" id="rpr:RP775"/>
<dbReference type="PATRIC" id="fig|272947.5.peg.810"/>
<dbReference type="eggNOG" id="COG0552">
    <property type="taxonomic scope" value="Bacteria"/>
</dbReference>
<dbReference type="HOGENOM" id="CLU_009301_3_4_5"/>
<dbReference type="OrthoDB" id="9804720at2"/>
<dbReference type="Proteomes" id="UP000002480">
    <property type="component" value="Chromosome"/>
</dbReference>
<dbReference type="GO" id="GO:0005737">
    <property type="term" value="C:cytoplasm"/>
    <property type="evidence" value="ECO:0007669"/>
    <property type="project" value="UniProtKB-SubCell"/>
</dbReference>
<dbReference type="GO" id="GO:0005886">
    <property type="term" value="C:plasma membrane"/>
    <property type="evidence" value="ECO:0007669"/>
    <property type="project" value="UniProtKB-SubCell"/>
</dbReference>
<dbReference type="GO" id="GO:0016887">
    <property type="term" value="F:ATP hydrolysis activity"/>
    <property type="evidence" value="ECO:0007669"/>
    <property type="project" value="InterPro"/>
</dbReference>
<dbReference type="GO" id="GO:0005525">
    <property type="term" value="F:GTP binding"/>
    <property type="evidence" value="ECO:0007669"/>
    <property type="project" value="UniProtKB-UniRule"/>
</dbReference>
<dbReference type="GO" id="GO:0003924">
    <property type="term" value="F:GTPase activity"/>
    <property type="evidence" value="ECO:0007669"/>
    <property type="project" value="UniProtKB-UniRule"/>
</dbReference>
<dbReference type="GO" id="GO:0005047">
    <property type="term" value="F:signal recognition particle binding"/>
    <property type="evidence" value="ECO:0007669"/>
    <property type="project" value="TreeGrafter"/>
</dbReference>
<dbReference type="GO" id="GO:0006614">
    <property type="term" value="P:SRP-dependent cotranslational protein targeting to membrane"/>
    <property type="evidence" value="ECO:0007669"/>
    <property type="project" value="InterPro"/>
</dbReference>
<dbReference type="CDD" id="cd17874">
    <property type="entry name" value="FtsY"/>
    <property type="match status" value="1"/>
</dbReference>
<dbReference type="FunFam" id="3.40.50.300:FF:000053">
    <property type="entry name" value="Signal recognition particle receptor FtsY"/>
    <property type="match status" value="1"/>
</dbReference>
<dbReference type="Gene3D" id="3.40.50.300">
    <property type="entry name" value="P-loop containing nucleotide triphosphate hydrolases"/>
    <property type="match status" value="1"/>
</dbReference>
<dbReference type="Gene3D" id="1.20.120.140">
    <property type="entry name" value="Signal recognition particle SRP54, nucleotide-binding domain"/>
    <property type="match status" value="1"/>
</dbReference>
<dbReference type="HAMAP" id="MF_00920">
    <property type="entry name" value="FtsY"/>
    <property type="match status" value="1"/>
</dbReference>
<dbReference type="InterPro" id="IPR003593">
    <property type="entry name" value="AAA+_ATPase"/>
</dbReference>
<dbReference type="InterPro" id="IPR027417">
    <property type="entry name" value="P-loop_NTPase"/>
</dbReference>
<dbReference type="InterPro" id="IPR013822">
    <property type="entry name" value="Signal_recog_particl_SRP54_hlx"/>
</dbReference>
<dbReference type="InterPro" id="IPR004390">
    <property type="entry name" value="SR_rcpt_FtsY"/>
</dbReference>
<dbReference type="InterPro" id="IPR036225">
    <property type="entry name" value="SRP/SRP_N"/>
</dbReference>
<dbReference type="InterPro" id="IPR000897">
    <property type="entry name" value="SRP54_GTPase_dom"/>
</dbReference>
<dbReference type="InterPro" id="IPR042101">
    <property type="entry name" value="SRP54_N_sf"/>
</dbReference>
<dbReference type="NCBIfam" id="TIGR00064">
    <property type="entry name" value="ftsY"/>
    <property type="match status" value="1"/>
</dbReference>
<dbReference type="PANTHER" id="PTHR43134">
    <property type="entry name" value="SIGNAL RECOGNITION PARTICLE RECEPTOR SUBUNIT ALPHA"/>
    <property type="match status" value="1"/>
</dbReference>
<dbReference type="PANTHER" id="PTHR43134:SF1">
    <property type="entry name" value="SIGNAL RECOGNITION PARTICLE RECEPTOR SUBUNIT ALPHA"/>
    <property type="match status" value="1"/>
</dbReference>
<dbReference type="Pfam" id="PF00448">
    <property type="entry name" value="SRP54"/>
    <property type="match status" value="1"/>
</dbReference>
<dbReference type="Pfam" id="PF02881">
    <property type="entry name" value="SRP54_N"/>
    <property type="match status" value="1"/>
</dbReference>
<dbReference type="SMART" id="SM00382">
    <property type="entry name" value="AAA"/>
    <property type="match status" value="1"/>
</dbReference>
<dbReference type="SMART" id="SM00962">
    <property type="entry name" value="SRP54"/>
    <property type="match status" value="1"/>
</dbReference>
<dbReference type="SMART" id="SM00963">
    <property type="entry name" value="SRP54_N"/>
    <property type="match status" value="1"/>
</dbReference>
<dbReference type="SUPFAM" id="SSF47364">
    <property type="entry name" value="Domain of the SRP/SRP receptor G-proteins"/>
    <property type="match status" value="1"/>
</dbReference>
<dbReference type="SUPFAM" id="SSF52540">
    <property type="entry name" value="P-loop containing nucleoside triphosphate hydrolases"/>
    <property type="match status" value="1"/>
</dbReference>
<dbReference type="PROSITE" id="PS00300">
    <property type="entry name" value="SRP54"/>
    <property type="match status" value="1"/>
</dbReference>
<evidence type="ECO:0000255" key="1">
    <source>
        <dbReference type="HAMAP-Rule" id="MF_00920"/>
    </source>
</evidence>
<reference key="1">
    <citation type="journal article" date="1997" name="Microbiology">
        <title>Genomic rearrangements during evolution of the obligate intracellular parasite Rickettsia prowazekii as inferred from an analysis of 52015 bp nucleotide sequence.</title>
        <authorList>
            <person name="Andersson J.O."/>
            <person name="Andersson S.G.E."/>
        </authorList>
    </citation>
    <scope>NUCLEOTIDE SEQUENCE [GENOMIC DNA]</scope>
    <source>
        <strain>Madrid E</strain>
    </source>
</reference>
<reference key="2">
    <citation type="journal article" date="1998" name="Nature">
        <title>The genome sequence of Rickettsia prowazekii and the origin of mitochondria.</title>
        <authorList>
            <person name="Andersson S.G.E."/>
            <person name="Zomorodipour A."/>
            <person name="Andersson J.O."/>
            <person name="Sicheritz-Ponten T."/>
            <person name="Alsmark U.C.M."/>
            <person name="Podowski R.M."/>
            <person name="Naeslund A.K."/>
            <person name="Eriksson A.-S."/>
            <person name="Winkler H.H."/>
            <person name="Kurland C.G."/>
        </authorList>
    </citation>
    <scope>NUCLEOTIDE SEQUENCE [LARGE SCALE GENOMIC DNA]</scope>
    <source>
        <strain>Madrid E</strain>
    </source>
</reference>
<reference key="3">
    <citation type="journal article" date="1999" name="Mol. Biol. Evol.">
        <title>Genome degradation is an ongoing process in Rickettsia.</title>
        <authorList>
            <person name="Andersson J.O."/>
            <person name="Andersson S.G.E."/>
        </authorList>
    </citation>
    <scope>NUCLEOTIDE SEQUENCE [GENOMIC DNA] OF 168-303</scope>
    <source>
        <strain>B</strain>
        <strain>Madrid E</strain>
    </source>
</reference>
<gene>
    <name evidence="1" type="primary">ftsY</name>
    <name type="ordered locus">RP775</name>
</gene>
<name>FTSY_RICPR</name>
<proteinExistence type="inferred from homology"/>
<protein>
    <recommendedName>
        <fullName evidence="1">Signal recognition particle receptor FtsY</fullName>
        <shortName evidence="1">SRP receptor</shortName>
        <ecNumber evidence="1">3.6.5.4</ecNumber>
    </recommendedName>
</protein>